<feature type="chain" id="PRO_0000163394" description="Ribosome maturation factor RimM">
    <location>
        <begin position="1"/>
        <end position="170"/>
    </location>
</feature>
<feature type="domain" description="PRC barrel" evidence="1">
    <location>
        <begin position="98"/>
        <end position="170"/>
    </location>
</feature>
<evidence type="ECO:0000255" key="1">
    <source>
        <dbReference type="HAMAP-Rule" id="MF_00014"/>
    </source>
</evidence>
<keyword id="KW-0143">Chaperone</keyword>
<keyword id="KW-0963">Cytoplasm</keyword>
<keyword id="KW-1185">Reference proteome</keyword>
<keyword id="KW-0690">Ribosome biogenesis</keyword>
<keyword id="KW-0698">rRNA processing</keyword>
<sequence length="170" mass="19237">MKDNERRILLGRVVGGFGLRGEIKIESWTEPRDAIFRYQPWLLRSPTGTESMLNGARGYETGKRLIATFPGINDRNGVEAICGTEIYVPRSALPPPHPDEYYWVDLEGLQVHTLEGVVLGSVSHLFSNGANDVIVIHGERERLIPFVQPDYVKSVDFEAERIVVDWDPEF</sequence>
<comment type="function">
    <text evidence="1">An accessory protein needed during the final step in the assembly of 30S ribosomal subunit, possibly for assembly of the head region. Essential for efficient processing of 16S rRNA. May be needed both before and after RbfA during the maturation of 16S rRNA. It has affinity for free ribosomal 30S subunits but not for 70S ribosomes.</text>
</comment>
<comment type="subunit">
    <text evidence="1">Binds ribosomal protein uS19.</text>
</comment>
<comment type="subcellular location">
    <subcellularLocation>
        <location evidence="1">Cytoplasm</location>
    </subcellularLocation>
</comment>
<comment type="domain">
    <text evidence="1">The PRC barrel domain binds ribosomal protein uS19.</text>
</comment>
<comment type="similarity">
    <text evidence="1">Belongs to the RimM family.</text>
</comment>
<dbReference type="EMBL" id="AE009442">
    <property type="protein sequence ID" value="AAO27982.1"/>
    <property type="molecule type" value="Genomic_DNA"/>
</dbReference>
<dbReference type="RefSeq" id="WP_004087641.1">
    <property type="nucleotide sequence ID" value="NC_004556.1"/>
</dbReference>
<dbReference type="SMR" id="Q87F55"/>
<dbReference type="GeneID" id="93903773"/>
<dbReference type="KEGG" id="xft:PD_0082"/>
<dbReference type="HOGENOM" id="CLU_077636_1_0_6"/>
<dbReference type="Proteomes" id="UP000002516">
    <property type="component" value="Chromosome"/>
</dbReference>
<dbReference type="GO" id="GO:0005737">
    <property type="term" value="C:cytoplasm"/>
    <property type="evidence" value="ECO:0007669"/>
    <property type="project" value="UniProtKB-SubCell"/>
</dbReference>
<dbReference type="GO" id="GO:0005840">
    <property type="term" value="C:ribosome"/>
    <property type="evidence" value="ECO:0007669"/>
    <property type="project" value="InterPro"/>
</dbReference>
<dbReference type="GO" id="GO:0043022">
    <property type="term" value="F:ribosome binding"/>
    <property type="evidence" value="ECO:0007669"/>
    <property type="project" value="InterPro"/>
</dbReference>
<dbReference type="GO" id="GO:0042274">
    <property type="term" value="P:ribosomal small subunit biogenesis"/>
    <property type="evidence" value="ECO:0007669"/>
    <property type="project" value="UniProtKB-UniRule"/>
</dbReference>
<dbReference type="GO" id="GO:0006364">
    <property type="term" value="P:rRNA processing"/>
    <property type="evidence" value="ECO:0007669"/>
    <property type="project" value="UniProtKB-UniRule"/>
</dbReference>
<dbReference type="Gene3D" id="2.30.30.240">
    <property type="entry name" value="PRC-barrel domain"/>
    <property type="match status" value="1"/>
</dbReference>
<dbReference type="Gene3D" id="2.40.30.60">
    <property type="entry name" value="RimM"/>
    <property type="match status" value="1"/>
</dbReference>
<dbReference type="HAMAP" id="MF_00014">
    <property type="entry name" value="Ribosome_mat_RimM"/>
    <property type="match status" value="1"/>
</dbReference>
<dbReference type="InterPro" id="IPR011033">
    <property type="entry name" value="PRC_barrel-like_sf"/>
</dbReference>
<dbReference type="InterPro" id="IPR056792">
    <property type="entry name" value="PRC_RimM"/>
</dbReference>
<dbReference type="InterPro" id="IPR011961">
    <property type="entry name" value="RimM"/>
</dbReference>
<dbReference type="InterPro" id="IPR002676">
    <property type="entry name" value="RimM_N"/>
</dbReference>
<dbReference type="InterPro" id="IPR036976">
    <property type="entry name" value="RimM_N_sf"/>
</dbReference>
<dbReference type="InterPro" id="IPR009000">
    <property type="entry name" value="Transl_B-barrel_sf"/>
</dbReference>
<dbReference type="NCBIfam" id="TIGR02273">
    <property type="entry name" value="16S_RimM"/>
    <property type="match status" value="1"/>
</dbReference>
<dbReference type="PANTHER" id="PTHR33692">
    <property type="entry name" value="RIBOSOME MATURATION FACTOR RIMM"/>
    <property type="match status" value="1"/>
</dbReference>
<dbReference type="PANTHER" id="PTHR33692:SF1">
    <property type="entry name" value="RIBOSOME MATURATION FACTOR RIMM"/>
    <property type="match status" value="1"/>
</dbReference>
<dbReference type="Pfam" id="PF24986">
    <property type="entry name" value="PRC_RimM"/>
    <property type="match status" value="1"/>
</dbReference>
<dbReference type="Pfam" id="PF01782">
    <property type="entry name" value="RimM"/>
    <property type="match status" value="1"/>
</dbReference>
<dbReference type="SUPFAM" id="SSF50346">
    <property type="entry name" value="PRC-barrel domain"/>
    <property type="match status" value="1"/>
</dbReference>
<dbReference type="SUPFAM" id="SSF50447">
    <property type="entry name" value="Translation proteins"/>
    <property type="match status" value="1"/>
</dbReference>
<reference key="1">
    <citation type="journal article" date="2003" name="J. Bacteriol.">
        <title>Comparative analyses of the complete genome sequences of Pierce's disease and citrus variegated chlorosis strains of Xylella fastidiosa.</title>
        <authorList>
            <person name="Van Sluys M.A."/>
            <person name="de Oliveira M.C."/>
            <person name="Monteiro-Vitorello C.B."/>
            <person name="Miyaki C.Y."/>
            <person name="Furlan L.R."/>
            <person name="Camargo L.E.A."/>
            <person name="da Silva A.C.R."/>
            <person name="Moon D.H."/>
            <person name="Takita M.A."/>
            <person name="Lemos E.G.M."/>
            <person name="Machado M.A."/>
            <person name="Ferro M.I.T."/>
            <person name="da Silva F.R."/>
            <person name="Goldman M.H.S."/>
            <person name="Goldman G.H."/>
            <person name="Lemos M.V.F."/>
            <person name="El-Dorry H."/>
            <person name="Tsai S.M."/>
            <person name="Carrer H."/>
            <person name="Carraro D.M."/>
            <person name="de Oliveira R.C."/>
            <person name="Nunes L.R."/>
            <person name="Siqueira W.J."/>
            <person name="Coutinho L.L."/>
            <person name="Kimura E.T."/>
            <person name="Ferro E.S."/>
            <person name="Harakava R."/>
            <person name="Kuramae E.E."/>
            <person name="Marino C.L."/>
            <person name="Giglioti E."/>
            <person name="Abreu I.L."/>
            <person name="Alves L.M.C."/>
            <person name="do Amaral A.M."/>
            <person name="Baia G.S."/>
            <person name="Blanco S.R."/>
            <person name="Brito M.S."/>
            <person name="Cannavan F.S."/>
            <person name="Celestino A.V."/>
            <person name="da Cunha A.F."/>
            <person name="Fenille R.C."/>
            <person name="Ferro J.A."/>
            <person name="Formighieri E.F."/>
            <person name="Kishi L.T."/>
            <person name="Leoni S.G."/>
            <person name="Oliveira A.R."/>
            <person name="Rosa V.E. Jr."/>
            <person name="Sassaki F.T."/>
            <person name="Sena J.A.D."/>
            <person name="de Souza A.A."/>
            <person name="Truffi D."/>
            <person name="Tsukumo F."/>
            <person name="Yanai G.M."/>
            <person name="Zaros L.G."/>
            <person name="Civerolo E.L."/>
            <person name="Simpson A.J.G."/>
            <person name="Almeida N.F. Jr."/>
            <person name="Setubal J.C."/>
            <person name="Kitajima J.P."/>
        </authorList>
    </citation>
    <scope>NUCLEOTIDE SEQUENCE [LARGE SCALE GENOMIC DNA]</scope>
    <source>
        <strain>Temecula1 / ATCC 700964</strain>
    </source>
</reference>
<proteinExistence type="inferred from homology"/>
<accession>Q87F55</accession>
<organism>
    <name type="scientific">Xylella fastidiosa (strain Temecula1 / ATCC 700964)</name>
    <dbReference type="NCBI Taxonomy" id="183190"/>
    <lineage>
        <taxon>Bacteria</taxon>
        <taxon>Pseudomonadati</taxon>
        <taxon>Pseudomonadota</taxon>
        <taxon>Gammaproteobacteria</taxon>
        <taxon>Lysobacterales</taxon>
        <taxon>Lysobacteraceae</taxon>
        <taxon>Xylella</taxon>
    </lineage>
</organism>
<protein>
    <recommendedName>
        <fullName evidence="1">Ribosome maturation factor RimM</fullName>
    </recommendedName>
</protein>
<name>RIMM_XYLFT</name>
<gene>
    <name evidence="1" type="primary">rimM</name>
    <name type="ordered locus">PD_0082</name>
</gene>